<sequence length="291" mass="31719">MKSEAKDGEEESLQTAFKKLRVDASGSIASLSVGEGASVRASVRAAVEDAKPKSACASKDSWHGSTRKSSRGAVRTQRRRRSKSPVLHPPKFIHCSTIASSSSQLKHKSQTDSPDGSSGLGISTPKEFNAGECSSSLDTNHTGAVAEPLRTSVPRLPSESKEEDSSDAPQVSQASLQANDLSDFQSVSKLNLGKPCVCIGKECQCKRWHDMEVYSFSGLQNVPPLAPERRSTLEDYSQSLHTRTLSGSPRSCSEQARVYVDDVTIEDLSGYMEYYLYIPKKMSHMAEMMYT</sequence>
<protein>
    <recommendedName>
        <fullName>Oxidative stress-responsive serine-rich protein 1</fullName>
    </recommendedName>
    <alternativeName>
        <fullName>Oxidative stress-responsive protein 1</fullName>
    </alternativeName>
    <alternativeName>
        <fullName>Peroxide-inducible transcript 1 protein</fullName>
    </alternativeName>
</protein>
<reference key="1">
    <citation type="journal article" date="2005" name="BMC Genomics">
        <title>Characterization of 954 bovine full-CDS cDNA sequences.</title>
        <authorList>
            <person name="Harhay G.P."/>
            <person name="Sonstegard T.S."/>
            <person name="Keele J.W."/>
            <person name="Heaton M.P."/>
            <person name="Clawson M.L."/>
            <person name="Snelling W.M."/>
            <person name="Wiedmann R.T."/>
            <person name="Van Tassell C.P."/>
            <person name="Smith T.P.L."/>
        </authorList>
    </citation>
    <scope>NUCLEOTIDE SEQUENCE [LARGE SCALE MRNA]</scope>
</reference>
<reference key="2">
    <citation type="submission" date="2005-11" db="EMBL/GenBank/DDBJ databases">
        <authorList>
            <consortium name="NIH - Mammalian Gene Collection (MGC) project"/>
        </authorList>
    </citation>
    <scope>NUCLEOTIDE SEQUENCE [LARGE SCALE MRNA]</scope>
    <source>
        <strain>Crossbred X Angus</strain>
        <tissue>Liver</tissue>
    </source>
</reference>
<gene>
    <name type="primary">OSER1</name>
</gene>
<feature type="chain" id="PRO_0000247937" description="Oxidative stress-responsive serine-rich protein 1">
    <location>
        <begin position="1"/>
        <end position="291"/>
    </location>
</feature>
<feature type="region of interest" description="Disordered" evidence="3">
    <location>
        <begin position="48"/>
        <end position="174"/>
    </location>
</feature>
<feature type="compositionally biased region" description="Basic residues" evidence="3">
    <location>
        <begin position="65"/>
        <end position="83"/>
    </location>
</feature>
<feature type="compositionally biased region" description="Polar residues" evidence="3">
    <location>
        <begin position="132"/>
        <end position="142"/>
    </location>
</feature>
<feature type="modified residue" description="Phosphothreonine" evidence="1">
    <location>
        <position position="142"/>
    </location>
</feature>
<feature type="modified residue" description="Phosphothreonine" evidence="2">
    <location>
        <position position="232"/>
    </location>
</feature>
<organism>
    <name type="scientific">Bos taurus</name>
    <name type="common">Bovine</name>
    <dbReference type="NCBI Taxonomy" id="9913"/>
    <lineage>
        <taxon>Eukaryota</taxon>
        <taxon>Metazoa</taxon>
        <taxon>Chordata</taxon>
        <taxon>Craniata</taxon>
        <taxon>Vertebrata</taxon>
        <taxon>Euteleostomi</taxon>
        <taxon>Mammalia</taxon>
        <taxon>Eutheria</taxon>
        <taxon>Laurasiatheria</taxon>
        <taxon>Artiodactyla</taxon>
        <taxon>Ruminantia</taxon>
        <taxon>Pecora</taxon>
        <taxon>Bovidae</taxon>
        <taxon>Bovinae</taxon>
        <taxon>Bos</taxon>
    </lineage>
</organism>
<keyword id="KW-0597">Phosphoprotein</keyword>
<keyword id="KW-1185">Reference proteome</keyword>
<accession>Q5E9A0</accession>
<evidence type="ECO:0000250" key="1">
    <source>
        <dbReference type="UniProtKB" id="Q703I1"/>
    </source>
</evidence>
<evidence type="ECO:0000250" key="2">
    <source>
        <dbReference type="UniProtKB" id="Q9NX31"/>
    </source>
</evidence>
<evidence type="ECO:0000256" key="3">
    <source>
        <dbReference type="SAM" id="MobiDB-lite"/>
    </source>
</evidence>
<dbReference type="EMBL" id="BT021020">
    <property type="protein sequence ID" value="AAX09037.1"/>
    <property type="molecule type" value="mRNA"/>
</dbReference>
<dbReference type="EMBL" id="BC110226">
    <property type="protein sequence ID" value="AAI10227.1"/>
    <property type="molecule type" value="mRNA"/>
</dbReference>
<dbReference type="RefSeq" id="NP_001015568.1">
    <property type="nucleotide sequence ID" value="NM_001015568.1"/>
</dbReference>
<dbReference type="RefSeq" id="XP_010809736.1">
    <property type="nucleotide sequence ID" value="XM_010811434.2"/>
</dbReference>
<dbReference type="RefSeq" id="XP_059748496.1">
    <property type="nucleotide sequence ID" value="XM_059892513.1"/>
</dbReference>
<dbReference type="RefSeq" id="XP_059748497.1">
    <property type="nucleotide sequence ID" value="XM_059892514.1"/>
</dbReference>
<dbReference type="FunCoup" id="Q5E9A0">
    <property type="interactions" value="2928"/>
</dbReference>
<dbReference type="STRING" id="9913.ENSBTAP00000073345"/>
<dbReference type="PaxDb" id="9913-ENSBTAP00000022448"/>
<dbReference type="GeneID" id="510457"/>
<dbReference type="KEGG" id="bta:510457"/>
<dbReference type="CTD" id="51526"/>
<dbReference type="VEuPathDB" id="HostDB:ENSBTAG00000016873"/>
<dbReference type="eggNOG" id="ENOG502QUK0">
    <property type="taxonomic scope" value="Eukaryota"/>
</dbReference>
<dbReference type="HOGENOM" id="CLU_050222_0_0_1"/>
<dbReference type="InParanoid" id="Q5E9A0"/>
<dbReference type="OMA" id="KACQCKL"/>
<dbReference type="OrthoDB" id="10045817at2759"/>
<dbReference type="TreeFam" id="TF331727"/>
<dbReference type="Proteomes" id="UP000009136">
    <property type="component" value="Chromosome 13"/>
</dbReference>
<dbReference type="Bgee" id="ENSBTAG00000016873">
    <property type="expression patterns" value="Expressed in oocyte and 104 other cell types or tissues"/>
</dbReference>
<dbReference type="GO" id="GO:0070301">
    <property type="term" value="P:cellular response to hydrogen peroxide"/>
    <property type="evidence" value="ECO:0000318"/>
    <property type="project" value="GO_Central"/>
</dbReference>
<dbReference type="InterPro" id="IPR008494">
    <property type="entry name" value="DUF776"/>
</dbReference>
<dbReference type="PANTHER" id="PTHR31383">
    <property type="entry name" value="OXIDATIVE STRESS-RESPONSE SERINE-RICH PROTEIN 1"/>
    <property type="match status" value="1"/>
</dbReference>
<dbReference type="PANTHER" id="PTHR31383:SF2">
    <property type="entry name" value="OXIDATIVE STRESS-RESPONSIVE SERINE-RICH PROTEIN 1"/>
    <property type="match status" value="1"/>
</dbReference>
<dbReference type="Pfam" id="PF05604">
    <property type="entry name" value="DUF776"/>
    <property type="match status" value="1"/>
</dbReference>
<proteinExistence type="evidence at transcript level"/>
<name>OSER1_BOVIN</name>